<keyword id="KW-0378">Hydrolase</keyword>
<keyword id="KW-0464">Manganese</keyword>
<keyword id="KW-0479">Metal-binding</keyword>
<accession>P19268</accession>
<feature type="chain" id="PRO_0000173785" description="Uncharacterized 32.2 kDa protein in hmfB 3'region">
    <location>
        <begin position="1"/>
        <end position="285"/>
    </location>
</feature>
<feature type="binding site" evidence="1">
    <location>
        <position position="110"/>
    </location>
    <ligand>
        <name>Mn(2+)</name>
        <dbReference type="ChEBI" id="CHEBI:29035"/>
        <label>1</label>
    </ligand>
</feature>
<feature type="binding site" evidence="1">
    <location>
        <position position="131"/>
    </location>
    <ligand>
        <name>Mn(2+)</name>
        <dbReference type="ChEBI" id="CHEBI:29035"/>
        <label>1</label>
    </ligand>
</feature>
<feature type="binding site" evidence="1">
    <location>
        <position position="131"/>
    </location>
    <ligand>
        <name>Mn(2+)</name>
        <dbReference type="ChEBI" id="CHEBI:29035"/>
        <label>2</label>
    </ligand>
</feature>
<feature type="binding site" evidence="1">
    <location>
        <position position="133"/>
    </location>
    <ligand>
        <name>Mn(2+)</name>
        <dbReference type="ChEBI" id="CHEBI:29035"/>
        <label>2</label>
    </ligand>
</feature>
<feature type="binding site" evidence="1">
    <location>
        <position position="135"/>
    </location>
    <ligand>
        <name>Mn(2+)</name>
        <dbReference type="ChEBI" id="CHEBI:29035"/>
        <label>1</label>
    </ligand>
</feature>
<feature type="binding site" evidence="1">
    <location>
        <position position="214"/>
    </location>
    <ligand>
        <name>Mn(2+)</name>
        <dbReference type="ChEBI" id="CHEBI:29035"/>
        <label>1</label>
    </ligand>
</feature>
<feature type="binding site" evidence="1">
    <location>
        <position position="214"/>
    </location>
    <ligand>
        <name>Mn(2+)</name>
        <dbReference type="ChEBI" id="CHEBI:29035"/>
        <label>2</label>
    </ligand>
</feature>
<feature type="binding site" evidence="1">
    <location>
        <position position="216"/>
    </location>
    <ligand>
        <name>Mn(2+)</name>
        <dbReference type="ChEBI" id="CHEBI:29035"/>
        <label>2</label>
    </ligand>
</feature>
<comment type="cofactor">
    <cofactor evidence="1">
        <name>Mn(2+)</name>
        <dbReference type="ChEBI" id="CHEBI:29035"/>
    </cofactor>
</comment>
<comment type="similarity">
    <text evidence="1">Belongs to the arginase family.</text>
</comment>
<organism>
    <name type="scientific">Methanothermus fervidus</name>
    <dbReference type="NCBI Taxonomy" id="2180"/>
    <lineage>
        <taxon>Archaea</taxon>
        <taxon>Methanobacteriati</taxon>
        <taxon>Methanobacteriota</taxon>
        <taxon>Methanomada group</taxon>
        <taxon>Methanobacteria</taxon>
        <taxon>Methanobacteriales</taxon>
        <taxon>Methanothermaceae</taxon>
        <taxon>Methanothermus</taxon>
    </lineage>
</organism>
<sequence>MGLKFAYSKDPSSLKYLSNKKVFGLLGVPFDSTSTYKPGSRFGPLMIRQASYNFENYSLHYRKKLDVPIIDLGDIEVILGDFKNTCRNISEKVQEVLKKGMIPIVLGGEHSITYGVVKTFDLSDVTILHFDAHMDMANTYAGKKFSHATVMRRIYELHPKKIVQIGVRSCTKEEHEFVLNENIKYYTSRDIIEKFNMVLNEINKLDGPFYVTVDIDVLDPGYAPGVGNPTPVGITPYHMEKFIEKIARKKIIGIDIVEVATDRIGDPAAMNAAKILYDFLFAIKI</sequence>
<proteinExistence type="inferred from homology"/>
<name>YHMF_METFE</name>
<protein>
    <recommendedName>
        <fullName>Uncharacterized 32.2 kDa protein in hmfB 3'region</fullName>
    </recommendedName>
</protein>
<reference key="1">
    <citation type="journal article" date="1990" name="Proc. Natl. Acad. Sci. U.S.A.">
        <title>HMf, a DNA-binding protein isolated from the hyperthermophilic archaeon Methanothermus fervidus, is most closely related to histones.</title>
        <authorList>
            <person name="Sandman K.M."/>
            <person name="Krzycki J.A."/>
            <person name="Dobrinski B."/>
            <person name="Lurz R."/>
            <person name="Reeve J.N."/>
        </authorList>
    </citation>
    <scope>NUCLEOTIDE SEQUENCE [GENOMIC DNA]</scope>
</reference>
<evidence type="ECO:0000255" key="1">
    <source>
        <dbReference type="PROSITE-ProRule" id="PRU00742"/>
    </source>
</evidence>
<dbReference type="EMBL" id="M34778">
    <property type="protein sequence ID" value="AAA72081.1"/>
    <property type="molecule type" value="Genomic_DNA"/>
</dbReference>
<dbReference type="RefSeq" id="WP_013414264.1">
    <property type="nucleotide sequence ID" value="NC_014658.1"/>
</dbReference>
<dbReference type="SMR" id="P19268"/>
<dbReference type="GeneID" id="9962948"/>
<dbReference type="OMA" id="YELTTIM"/>
<dbReference type="GO" id="GO:0008783">
    <property type="term" value="F:agmatinase activity"/>
    <property type="evidence" value="ECO:0007669"/>
    <property type="project" value="TreeGrafter"/>
</dbReference>
<dbReference type="GO" id="GO:0046872">
    <property type="term" value="F:metal ion binding"/>
    <property type="evidence" value="ECO:0007669"/>
    <property type="project" value="UniProtKB-KW"/>
</dbReference>
<dbReference type="GO" id="GO:0033389">
    <property type="term" value="P:putrescine biosynthetic process from arginine, via agmatine"/>
    <property type="evidence" value="ECO:0007669"/>
    <property type="project" value="TreeGrafter"/>
</dbReference>
<dbReference type="CDD" id="cd11593">
    <property type="entry name" value="Agmatinase-like_2"/>
    <property type="match status" value="1"/>
</dbReference>
<dbReference type="Gene3D" id="3.40.800.10">
    <property type="entry name" value="Ureohydrolase domain"/>
    <property type="match status" value="1"/>
</dbReference>
<dbReference type="InterPro" id="IPR005925">
    <property type="entry name" value="Agmatinase-rel"/>
</dbReference>
<dbReference type="InterPro" id="IPR006035">
    <property type="entry name" value="Ureohydrolase"/>
</dbReference>
<dbReference type="InterPro" id="IPR023696">
    <property type="entry name" value="Ureohydrolase_dom_sf"/>
</dbReference>
<dbReference type="InterPro" id="IPR020855">
    <property type="entry name" value="Ureohydrolase_Mn_BS"/>
</dbReference>
<dbReference type="NCBIfam" id="TIGR01230">
    <property type="entry name" value="agmatinase"/>
    <property type="match status" value="1"/>
</dbReference>
<dbReference type="PANTHER" id="PTHR11358">
    <property type="entry name" value="ARGINASE/AGMATINASE"/>
    <property type="match status" value="1"/>
</dbReference>
<dbReference type="PANTHER" id="PTHR11358:SF26">
    <property type="entry name" value="GUANIDINO ACID HYDROLASE, MITOCHONDRIAL"/>
    <property type="match status" value="1"/>
</dbReference>
<dbReference type="Pfam" id="PF00491">
    <property type="entry name" value="Arginase"/>
    <property type="match status" value="1"/>
</dbReference>
<dbReference type="PIRSF" id="PIRSF036979">
    <property type="entry name" value="Arginase"/>
    <property type="match status" value="1"/>
</dbReference>
<dbReference type="SUPFAM" id="SSF52768">
    <property type="entry name" value="Arginase/deacetylase"/>
    <property type="match status" value="1"/>
</dbReference>
<dbReference type="PROSITE" id="PS01053">
    <property type="entry name" value="ARGINASE_1"/>
    <property type="match status" value="1"/>
</dbReference>
<dbReference type="PROSITE" id="PS51409">
    <property type="entry name" value="ARGINASE_2"/>
    <property type="match status" value="1"/>
</dbReference>